<feature type="chain" id="PRO_0000186349" description="Bifunctional dihydrofolate reductase-thymidylate synthase">
    <location>
        <begin position="1"/>
        <end position="608"/>
    </location>
</feature>
<feature type="domain" description="DHFR">
    <location>
        <begin position="10"/>
        <end position="228"/>
    </location>
</feature>
<feature type="region of interest" description="Thymidylate synthase">
    <location>
        <begin position="322"/>
        <end position="608"/>
    </location>
</feature>
<feature type="active site" evidence="1">
    <location>
        <position position="490"/>
    </location>
</feature>
<feature type="binding site">
    <location>
        <begin position="14"/>
        <end position="15"/>
    </location>
    <ligand>
        <name>substrate</name>
    </ligand>
</feature>
<feature type="binding site">
    <location>
        <position position="16"/>
    </location>
    <ligand>
        <name>NADP(+)</name>
        <dbReference type="ChEBI" id="CHEBI:58349"/>
    </ligand>
</feature>
<feature type="binding site" evidence="1">
    <location>
        <position position="31"/>
    </location>
    <ligand>
        <name>substrate</name>
    </ligand>
</feature>
<feature type="binding site">
    <location>
        <begin position="39"/>
        <end position="45"/>
    </location>
    <ligand>
        <name>NADP(+)</name>
        <dbReference type="ChEBI" id="CHEBI:58349"/>
    </ligand>
</feature>
<feature type="binding site">
    <location>
        <position position="54"/>
    </location>
    <ligand>
        <name>substrate</name>
    </ligand>
</feature>
<feature type="binding site">
    <location>
        <begin position="106"/>
        <end position="108"/>
    </location>
    <ligand>
        <name>NADP(+)</name>
        <dbReference type="ChEBI" id="CHEBI:58349"/>
    </ligand>
</feature>
<feature type="binding site">
    <location>
        <position position="108"/>
    </location>
    <ligand>
        <name>substrate</name>
    </ligand>
</feature>
<feature type="binding site">
    <location>
        <begin position="128"/>
        <end position="130"/>
    </location>
    <ligand>
        <name>NADP(+)</name>
        <dbReference type="ChEBI" id="CHEBI:58349"/>
    </ligand>
</feature>
<feature type="binding site">
    <location>
        <position position="144"/>
    </location>
    <ligand>
        <name>NADP(+)</name>
        <dbReference type="ChEBI" id="CHEBI:58349"/>
    </ligand>
</feature>
<feature type="binding site">
    <location>
        <position position="164"/>
    </location>
    <ligand>
        <name>substrate</name>
    </ligand>
</feature>
<feature type="binding site">
    <location>
        <begin position="165"/>
        <end position="172"/>
    </location>
    <ligand>
        <name>NADP(+)</name>
        <dbReference type="ChEBI" id="CHEBI:58349"/>
    </ligand>
</feature>
<feature type="binding site">
    <location>
        <position position="170"/>
    </location>
    <ligand>
        <name>substrate</name>
    </ligand>
</feature>
<feature type="binding site" evidence="1">
    <location>
        <position position="185"/>
    </location>
    <ligand>
        <name>substrate</name>
    </ligand>
</feature>
<feature type="binding site">
    <location>
        <position position="345"/>
    </location>
    <ligand>
        <name>dUMP</name>
        <dbReference type="ChEBI" id="CHEBI:246422"/>
    </ligand>
</feature>
<feature type="binding site">
    <location>
        <position position="491"/>
    </location>
    <ligand>
        <name>dUMP</name>
        <dbReference type="ChEBI" id="CHEBI:246422"/>
    </ligand>
</feature>
<feature type="binding site">
    <location>
        <begin position="509"/>
        <end position="513"/>
    </location>
    <ligand>
        <name>dUMP</name>
        <dbReference type="ChEBI" id="CHEBI:246422"/>
    </ligand>
</feature>
<feature type="binding site">
    <location>
        <position position="521"/>
    </location>
    <ligand>
        <name>dUMP</name>
        <dbReference type="ChEBI" id="CHEBI:246422"/>
    </ligand>
</feature>
<feature type="binding site">
    <location>
        <begin position="551"/>
        <end position="553"/>
    </location>
    <ligand>
        <name>dUMP</name>
        <dbReference type="ChEBI" id="CHEBI:246422"/>
    </ligand>
</feature>
<feature type="sequence variant" description="In strain: Isolate Palo-Alto.">
    <original>A</original>
    <variation>V</variation>
    <location>
        <position position="16"/>
    </location>
</feature>
<feature type="sequence variant">
    <original>N</original>
    <variation>I</variation>
    <location>
        <position position="51"/>
    </location>
</feature>
<feature type="sequence variant" description="In strain: Isolate FCR-3, Isolate Gambia and Isolate Palo-Alto.">
    <original>R</original>
    <variation>C</variation>
    <location>
        <position position="59"/>
    </location>
</feature>
<feature type="sequence variant" description="In strain: Isolate FCR-3, Isolate Gambia and Isolate Palo-Alto.">
    <original>N</original>
    <variation>T</variation>
    <location>
        <position position="108"/>
    </location>
</feature>
<feature type="helix" evidence="5">
    <location>
        <begin position="5"/>
        <end position="8"/>
    </location>
</feature>
<feature type="strand" evidence="5">
    <location>
        <begin position="11"/>
        <end position="20"/>
    </location>
</feature>
<feature type="turn" evidence="6">
    <location>
        <begin position="23"/>
        <end position="25"/>
    </location>
</feature>
<feature type="helix" evidence="5">
    <location>
        <begin position="27"/>
        <end position="29"/>
    </location>
</feature>
<feature type="helix" evidence="5">
    <location>
        <begin position="34"/>
        <end position="36"/>
    </location>
</feature>
<feature type="strand" evidence="5">
    <location>
        <begin position="37"/>
        <end position="42"/>
    </location>
</feature>
<feature type="strand" evidence="5">
    <location>
        <begin position="47"/>
        <end position="49"/>
    </location>
</feature>
<feature type="helix" evidence="5">
    <location>
        <begin position="52"/>
        <end position="63"/>
    </location>
</feature>
<feature type="helix" evidence="5">
    <location>
        <begin position="67"/>
        <end position="81"/>
    </location>
</feature>
<feature type="strand" evidence="5">
    <location>
        <begin position="101"/>
        <end position="105"/>
    </location>
</feature>
<feature type="helix" evidence="5">
    <location>
        <begin position="106"/>
        <end position="111"/>
    </location>
</feature>
<feature type="helix" evidence="5">
    <location>
        <begin position="114"/>
        <end position="116"/>
    </location>
</feature>
<feature type="strand" evidence="5">
    <location>
        <begin position="122"/>
        <end position="127"/>
    </location>
</feature>
<feature type="helix" evidence="5">
    <location>
        <begin position="133"/>
        <end position="135"/>
    </location>
</feature>
<feature type="strand" evidence="5">
    <location>
        <begin position="141"/>
        <end position="145"/>
    </location>
</feature>
<feature type="helix" evidence="5">
    <location>
        <begin position="146"/>
        <end position="155"/>
    </location>
</feature>
<feature type="strand" evidence="5">
    <location>
        <begin position="161"/>
        <end position="163"/>
    </location>
</feature>
<feature type="helix" evidence="5">
    <location>
        <begin position="167"/>
        <end position="175"/>
    </location>
</feature>
<feature type="strand" evidence="5">
    <location>
        <begin position="180"/>
        <end position="191"/>
    </location>
</feature>
<feature type="strand" evidence="5">
    <location>
        <begin position="194"/>
        <end position="196"/>
    </location>
</feature>
<feature type="turn" evidence="5">
    <location>
        <begin position="202"/>
        <end position="204"/>
    </location>
</feature>
<feature type="strand" evidence="5">
    <location>
        <begin position="205"/>
        <end position="210"/>
    </location>
</feature>
<feature type="strand" evidence="5">
    <location>
        <begin position="214"/>
        <end position="216"/>
    </location>
</feature>
<feature type="strand" evidence="5">
    <location>
        <begin position="219"/>
        <end position="228"/>
    </location>
</feature>
<feature type="helix" evidence="5">
    <location>
        <begin position="285"/>
        <end position="293"/>
    </location>
</feature>
<feature type="turn" evidence="5">
    <location>
        <begin position="294"/>
        <end position="296"/>
    </location>
</feature>
<feature type="turn" evidence="7">
    <location>
        <begin position="302"/>
        <end position="306"/>
    </location>
</feature>
<feature type="helix" evidence="5">
    <location>
        <begin position="309"/>
        <end position="312"/>
    </location>
</feature>
<feature type="helix" evidence="5">
    <location>
        <begin position="313"/>
        <end position="317"/>
    </location>
</feature>
<feature type="strand" evidence="5">
    <location>
        <begin position="319"/>
        <end position="321"/>
    </location>
</feature>
<feature type="helix" evidence="5">
    <location>
        <begin position="325"/>
        <end position="338"/>
    </location>
</feature>
<feature type="strand" evidence="5">
    <location>
        <begin position="340"/>
        <end position="342"/>
    </location>
</feature>
<feature type="turn" evidence="4">
    <location>
        <begin position="346"/>
        <end position="348"/>
    </location>
</feature>
<feature type="strand" evidence="5">
    <location>
        <begin position="350"/>
        <end position="361"/>
    </location>
</feature>
<feature type="turn" evidence="5">
    <location>
        <begin position="362"/>
        <end position="364"/>
    </location>
</feature>
<feature type="strand" evidence="5">
    <location>
        <begin position="370"/>
        <end position="372"/>
    </location>
</feature>
<feature type="helix" evidence="5">
    <location>
        <begin position="377"/>
        <end position="387"/>
    </location>
</feature>
<feature type="helix" evidence="5">
    <location>
        <begin position="393"/>
        <end position="397"/>
    </location>
</feature>
<feature type="turn" evidence="5">
    <location>
        <begin position="398"/>
        <end position="400"/>
    </location>
</feature>
<feature type="turn" evidence="4">
    <location>
        <begin position="403"/>
        <end position="405"/>
    </location>
</feature>
<feature type="helix" evidence="5">
    <location>
        <begin position="406"/>
        <end position="408"/>
    </location>
</feature>
<feature type="helix" evidence="5">
    <location>
        <begin position="410"/>
        <end position="415"/>
    </location>
</feature>
<feature type="helix" evidence="5">
    <location>
        <begin position="430"/>
        <end position="436"/>
    </location>
</feature>
<feature type="helix" evidence="5">
    <location>
        <begin position="455"/>
        <end position="465"/>
    </location>
</feature>
<feature type="strand" evidence="5">
    <location>
        <begin position="473"/>
        <end position="475"/>
    </location>
</feature>
<feature type="helix" evidence="5">
    <location>
        <begin position="479"/>
        <end position="484"/>
    </location>
</feature>
<feature type="strand" evidence="5">
    <location>
        <begin position="485"/>
        <end position="487"/>
    </location>
</feature>
<feature type="strand" evidence="5">
    <location>
        <begin position="490"/>
        <end position="499"/>
    </location>
</feature>
<feature type="strand" evidence="5">
    <location>
        <begin position="502"/>
        <end position="513"/>
    </location>
</feature>
<feature type="turn" evidence="5">
    <location>
        <begin position="514"/>
        <end position="516"/>
    </location>
</feature>
<feature type="helix" evidence="5">
    <location>
        <begin position="517"/>
        <end position="535"/>
    </location>
</feature>
<feature type="strand" evidence="5">
    <location>
        <begin position="539"/>
        <end position="553"/>
    </location>
</feature>
<feature type="helix" evidence="5">
    <location>
        <begin position="554"/>
        <end position="556"/>
    </location>
</feature>
<feature type="helix" evidence="5">
    <location>
        <begin position="557"/>
        <end position="563"/>
    </location>
</feature>
<feature type="strand" evidence="5">
    <location>
        <begin position="573"/>
        <end position="576"/>
    </location>
</feature>
<feature type="helix" evidence="5">
    <location>
        <begin position="583"/>
        <end position="585"/>
    </location>
</feature>
<feature type="helix" evidence="5">
    <location>
        <begin position="588"/>
        <end position="590"/>
    </location>
</feature>
<feature type="strand" evidence="5">
    <location>
        <begin position="591"/>
        <end position="594"/>
    </location>
</feature>
<name>DRTS_PLAFK</name>
<sequence>MMEQVCDVFDIYAICACCKVESKNEGKKNEVFNNYTFRGLGNKGVLPWKCNSLDMKYFRAVTTYVNESKYEKLKYKRCKYLNKETVDNVNDMPNSKKLQNVVVMGRTNWESIPKKFKPLSNRINVILSRTLKKEDFDEDVYIINKVEDLIVLLGKLNYYKCFIIGGSVVYQEFLEKKLIKKIYFTRINSTYECDVFFPEINENEYQIISVSDVYTSNNTTLDFIIYKKTNNKMLNEQNCIKGEEKNNDMPLKNDDKDTCHMKKLTEFYKNVDKYKINYENDDDDEEEDDFVYFNFNKEKEEKNKNSIHPNDFQIYNSLKYKYHPEYQYLNIIYDIMMNGNKQSDRTGVGVLSKFGYIMKFDLSQYFPLLTTKKLFLRGIIEELLWFIRGETNGNTLLNKNVRIWEANGTREFLDNRKLFHREVNDLGPIYGFQWRHFGAEYTNMYDNYENKGVDQLKNIINLIKNDPTSRRILLCAWNVKDLDQMALPPCHILCQFYVFDGKLSCIMYQRSCDLGLGVPFNIASYSIFTHMIAQVCNLQPAQFIHVLGNAHVYNNHIDSLKIQLNRIPYPFPTLKLNPDIKNIEDFTISDFTIQNYVHHEKISMDMAA</sequence>
<protein>
    <recommendedName>
        <fullName>Bifunctional dihydrofolate reductase-thymidylate synthase</fullName>
        <shortName>DHFR-TS</shortName>
    </recommendedName>
    <domain>
        <recommendedName>
            <fullName>Dihydrofolate reductase</fullName>
            <ecNumber>1.5.1.3</ecNumber>
        </recommendedName>
    </domain>
    <domain>
        <recommendedName>
            <fullName>Thymidylate synthase</fullName>
            <ecNumber>2.1.1.45</ecNumber>
        </recommendedName>
    </domain>
</protein>
<evidence type="ECO:0000250" key="1"/>
<evidence type="ECO:0000269" key="2">
    <source>
    </source>
</evidence>
<evidence type="ECO:0000305" key="3"/>
<evidence type="ECO:0007829" key="4">
    <source>
        <dbReference type="PDB" id="1J3J"/>
    </source>
</evidence>
<evidence type="ECO:0007829" key="5">
    <source>
        <dbReference type="PDB" id="1J3K"/>
    </source>
</evidence>
<evidence type="ECO:0007829" key="6">
    <source>
        <dbReference type="PDB" id="3DGA"/>
    </source>
</evidence>
<evidence type="ECO:0007829" key="7">
    <source>
        <dbReference type="PDB" id="7F3Y"/>
    </source>
</evidence>
<reference key="1">
    <citation type="journal article" date="1989" name="Gene">
        <title>Characterisation of the dihydrofolate reductase-thymidylate synthetase gene from human malaria parasites highly resistant to pyrimethamine.</title>
        <authorList>
            <person name="Snewin V.A."/>
            <person name="England S.M."/>
            <person name="Sims P.F.G."/>
            <person name="Hyde J.E."/>
        </authorList>
    </citation>
    <scope>NUCLEOTIDE SEQUENCE [GENOMIC DNA]</scope>
    <source>
        <strain>Isolate FCR3</strain>
        <strain>K1</strain>
    </source>
</reference>
<reference key="2">
    <citation type="journal article" date="1989" name="Mol. Biochem. Parasitol.">
        <title>Point mutations in the dihydrofolate reductase-thymidylate synthase gene as the molecular basis for pyrimethamine resistance in Plasmodium falciparum.</title>
        <authorList>
            <person name="Zolg J.W."/>
            <person name="Plitt J.R."/>
            <person name="Chen G.-X."/>
            <person name="Palmer S."/>
        </authorList>
    </citation>
    <scope>NUCLEOTIDE SEQUENCE [GENOMIC DNA]</scope>
</reference>
<reference key="3">
    <citation type="journal article" date="1988" name="Proc. Natl. Acad. Sci. U.S.A.">
        <title>Amino acid changes linked to pyrimethamine resistance in the dihydrofolate reductase-thymidylate synthase gene of Plasmodium falciparum.</title>
        <authorList>
            <person name="Cowman A.F."/>
            <person name="Morry M.J."/>
            <person name="Biggs B.A."/>
            <person name="Cross G.A.M."/>
            <person name="Foote S.J."/>
        </authorList>
    </citation>
    <scope>NUCLEOTIDE SEQUENCE [GENOMIC DNA]</scope>
    <source>
        <strain>Isolate Palo-Alto</strain>
    </source>
</reference>
<reference key="4">
    <citation type="journal article" date="1987" name="Proc. Natl. Acad. Sci. U.S.A.">
        <title>Molecular cloning and sequence analysis of the Plasmodium falciparum dihydrofolate reductase-thymidylate synthase gene.</title>
        <authorList>
            <person name="Bzik D.J."/>
            <person name="Li W.B."/>
            <person name="Horii T."/>
            <person name="Inselburg J."/>
        </authorList>
    </citation>
    <scope>NUCLEOTIDE SEQUENCE [GENOMIC DNA]</scope>
    <source>
        <strain>Isolate FCR3</strain>
    </source>
</reference>
<reference key="5">
    <citation type="journal article" date="2003" name="Nat. Struct. Biol.">
        <title>Insights into antifolate resistance from malarial DHFR-TS structures.</title>
        <authorList>
            <person name="Yuvaniyama J."/>
            <person name="Chitnumsub P."/>
            <person name="Kamchonwongpaisan S."/>
            <person name="Vanichtanankul J."/>
            <person name="Sirawaraporn W."/>
            <person name="Taylor P."/>
            <person name="Walkinshaw M.D."/>
            <person name="Yuthavong Y."/>
        </authorList>
    </citation>
    <scope>X-RAY CRYSTALLOGRAPHY (2.10 ANGSTROMS) OF WILD TYPE AND DRUG-RESISTANT VARIANTS IN COMPLEXES WITH NADP; UMP AND THE SYNTHETIC INHIBITORS WR99210 AND PYRIMETHAMINE</scope>
    <scope>CATALYTIC ACTIVITY</scope>
    <scope>SUBUNIT</scope>
</reference>
<reference key="6">
    <citation type="journal article" date="2009" name="ACS Chem. Biol.">
        <title>Exploiting structural analysis, in silico screening, and serendipity to identify novel inhibitors of drug-resistant falciparum malaria.</title>
        <authorList>
            <person name="Dasgupta T."/>
            <person name="Chitnumsub P."/>
            <person name="Kamchonwongpaisan S."/>
            <person name="Maneeruttanarungroj C."/>
            <person name="Nichols S.E."/>
            <person name="Lyons T.M."/>
            <person name="Tirado-Rives J."/>
            <person name="Jorgensen W.L."/>
            <person name="Yuthavong Y."/>
            <person name="Anderson K.S."/>
        </authorList>
    </citation>
    <scope>X-RAY CRYSTALLOGRAPHY (2.58 ANGSTROMS) OF WILD TYPE AND DRUG-RESISTANT VARIANTS IN COMPLEXES WITH NADP AND INHIBITORS RJF 001302; RJF 00670 AND RJF 00719</scope>
    <scope>CATALYTIC ACTIVITY</scope>
</reference>
<proteinExistence type="evidence at protein level"/>
<accession>P13922</accession>
<accession>Q27734</accession>
<dbReference type="EC" id="1.5.1.3"/>
<dbReference type="EC" id="2.1.1.45"/>
<dbReference type="EMBL" id="M22159">
    <property type="protein sequence ID" value="AAA29580.1"/>
    <property type="molecule type" value="Genomic_DNA"/>
</dbReference>
<dbReference type="EMBL" id="J04643">
    <property type="protein sequence ID" value="AAA29586.1"/>
    <property type="molecule type" value="Genomic_DNA"/>
</dbReference>
<dbReference type="EMBL" id="J03772">
    <property type="protein sequence ID" value="AAB59212.1"/>
    <property type="molecule type" value="Genomic_DNA"/>
</dbReference>
<dbReference type="EMBL" id="J03028">
    <property type="protein sequence ID" value="AAA29585.1"/>
    <property type="molecule type" value="Genomic_DNA"/>
</dbReference>
<dbReference type="PIR" id="A39975">
    <property type="entry name" value="RDZQK1"/>
</dbReference>
<dbReference type="PDB" id="1J3I">
    <property type="method" value="X-ray"/>
    <property type="resolution" value="2.33 A"/>
    <property type="chains" value="A/B=1-280, C/D=281-608"/>
</dbReference>
<dbReference type="PDB" id="1J3J">
    <property type="method" value="X-ray"/>
    <property type="resolution" value="2.30 A"/>
    <property type="chains" value="A/B=1-280, C/D=281-608"/>
</dbReference>
<dbReference type="PDB" id="1J3K">
    <property type="method" value="X-ray"/>
    <property type="resolution" value="2.10 A"/>
    <property type="chains" value="A/B=1-280, C/D=281-608"/>
</dbReference>
<dbReference type="PDB" id="3DG8">
    <property type="method" value="X-ray"/>
    <property type="resolution" value="2.58 A"/>
    <property type="chains" value="A/B=1-280, C/D=281-608"/>
</dbReference>
<dbReference type="PDB" id="3DGA">
    <property type="method" value="X-ray"/>
    <property type="resolution" value="2.70 A"/>
    <property type="chains" value="A/B=1-280, C/D=281-608"/>
</dbReference>
<dbReference type="PDB" id="7CTW">
    <property type="method" value="X-ray"/>
    <property type="resolution" value="2.51 A"/>
    <property type="chains" value="A/B=1-608"/>
</dbReference>
<dbReference type="PDB" id="7F3Y">
    <property type="method" value="X-ray"/>
    <property type="resolution" value="2.25 A"/>
    <property type="chains" value="A/B=1-608"/>
</dbReference>
<dbReference type="PDB" id="7F3Z">
    <property type="method" value="X-ray"/>
    <property type="resolution" value="2.60 A"/>
    <property type="chains" value="A/B=1-608"/>
</dbReference>
<dbReference type="PDB" id="8WGM">
    <property type="method" value="X-ray"/>
    <property type="resolution" value="2.15 A"/>
    <property type="chains" value="A/B=1-608"/>
</dbReference>
<dbReference type="PDBsum" id="1J3I"/>
<dbReference type="PDBsum" id="1J3J"/>
<dbReference type="PDBsum" id="1J3K"/>
<dbReference type="PDBsum" id="3DG8"/>
<dbReference type="PDBsum" id="3DGA"/>
<dbReference type="PDBsum" id="7CTW"/>
<dbReference type="PDBsum" id="7F3Y"/>
<dbReference type="PDBsum" id="7F3Z"/>
<dbReference type="PDBsum" id="8WGM"/>
<dbReference type="SMR" id="P13922"/>
<dbReference type="BindingDB" id="P13922"/>
<dbReference type="ChEMBL" id="CHEMBL1939"/>
<dbReference type="DrugBank" id="DB01131">
    <property type="generic name" value="Proguanil"/>
</dbReference>
<dbReference type="DrugBank" id="DB00205">
    <property type="generic name" value="Pyrimethamine"/>
</dbReference>
<dbReference type="DrugBank" id="DB01299">
    <property type="generic name" value="Sulfadoxine"/>
</dbReference>
<dbReference type="DrugCentral" id="P13922"/>
<dbReference type="MoonProt" id="P13922"/>
<dbReference type="BRENDA" id="1.5.1.3">
    <property type="organism ID" value="4889"/>
</dbReference>
<dbReference type="BRENDA" id="2.1.1.45">
    <property type="organism ID" value="4889"/>
</dbReference>
<dbReference type="SABIO-RK" id="P13922"/>
<dbReference type="UniPathway" id="UPA00077">
    <property type="reaction ID" value="UER00158"/>
</dbReference>
<dbReference type="EvolutionaryTrace" id="P13922"/>
<dbReference type="GO" id="GO:0005829">
    <property type="term" value="C:cytosol"/>
    <property type="evidence" value="ECO:0007669"/>
    <property type="project" value="TreeGrafter"/>
</dbReference>
<dbReference type="GO" id="GO:0005739">
    <property type="term" value="C:mitochondrion"/>
    <property type="evidence" value="ECO:0007669"/>
    <property type="project" value="TreeGrafter"/>
</dbReference>
<dbReference type="GO" id="GO:0004146">
    <property type="term" value="F:dihydrofolate reductase activity"/>
    <property type="evidence" value="ECO:0007669"/>
    <property type="project" value="UniProtKB-EC"/>
</dbReference>
<dbReference type="GO" id="GO:0004799">
    <property type="term" value="F:thymidylate synthase activity"/>
    <property type="evidence" value="ECO:0007669"/>
    <property type="project" value="UniProtKB-EC"/>
</dbReference>
<dbReference type="GO" id="GO:0006231">
    <property type="term" value="P:dTMP biosynthetic process"/>
    <property type="evidence" value="ECO:0007669"/>
    <property type="project" value="InterPro"/>
</dbReference>
<dbReference type="GO" id="GO:0032259">
    <property type="term" value="P:methylation"/>
    <property type="evidence" value="ECO:0007669"/>
    <property type="project" value="UniProtKB-KW"/>
</dbReference>
<dbReference type="GO" id="GO:0006730">
    <property type="term" value="P:one-carbon metabolic process"/>
    <property type="evidence" value="ECO:0007669"/>
    <property type="project" value="UniProtKB-KW"/>
</dbReference>
<dbReference type="GO" id="GO:0046654">
    <property type="term" value="P:tetrahydrofolate biosynthetic process"/>
    <property type="evidence" value="ECO:0007669"/>
    <property type="project" value="UniProtKB-UniPathway"/>
</dbReference>
<dbReference type="CDD" id="cd00209">
    <property type="entry name" value="DHFR"/>
    <property type="match status" value="1"/>
</dbReference>
<dbReference type="CDD" id="cd00351">
    <property type="entry name" value="TS_Pyrimidine_HMase"/>
    <property type="match status" value="1"/>
</dbReference>
<dbReference type="FunFam" id="3.30.572.10:FF:000004">
    <property type="entry name" value="Bifunctional dihydrofolate reductase-thymidylate synthase"/>
    <property type="match status" value="1"/>
</dbReference>
<dbReference type="FunFam" id="3.40.430.10:FF:000007">
    <property type="entry name" value="Bifunctional dihydrofolate reductase-thymidylate synthase"/>
    <property type="match status" value="1"/>
</dbReference>
<dbReference type="Gene3D" id="6.10.250.2210">
    <property type="match status" value="1"/>
</dbReference>
<dbReference type="Gene3D" id="3.40.430.10">
    <property type="entry name" value="Dihydrofolate Reductase, subunit A"/>
    <property type="match status" value="1"/>
</dbReference>
<dbReference type="Gene3D" id="3.30.572.10">
    <property type="entry name" value="Thymidylate synthase/dCMP hydroxymethylase domain"/>
    <property type="match status" value="1"/>
</dbReference>
<dbReference type="HAMAP" id="MF_00008">
    <property type="entry name" value="Thymidy_synth_bact"/>
    <property type="match status" value="1"/>
</dbReference>
<dbReference type="InterPro" id="IPR024072">
    <property type="entry name" value="DHFR-like_dom_sf"/>
</dbReference>
<dbReference type="InterPro" id="IPR012262">
    <property type="entry name" value="DHFR-TS"/>
</dbReference>
<dbReference type="InterPro" id="IPR017925">
    <property type="entry name" value="DHFR_CS"/>
</dbReference>
<dbReference type="InterPro" id="IPR001796">
    <property type="entry name" value="DHFR_dom"/>
</dbReference>
<dbReference type="InterPro" id="IPR045097">
    <property type="entry name" value="Thymidate_synth/dCMP_Mease"/>
</dbReference>
<dbReference type="InterPro" id="IPR023451">
    <property type="entry name" value="Thymidate_synth/dCMP_Mease_dom"/>
</dbReference>
<dbReference type="InterPro" id="IPR036926">
    <property type="entry name" value="Thymidate_synth/dCMP_Mease_sf"/>
</dbReference>
<dbReference type="InterPro" id="IPR000398">
    <property type="entry name" value="Thymidylate_synthase"/>
</dbReference>
<dbReference type="InterPro" id="IPR020940">
    <property type="entry name" value="Thymidylate_synthase_AS"/>
</dbReference>
<dbReference type="NCBIfam" id="NF002497">
    <property type="entry name" value="PRK01827.1-3"/>
    <property type="match status" value="1"/>
</dbReference>
<dbReference type="NCBIfam" id="TIGR03284">
    <property type="entry name" value="thym_sym"/>
    <property type="match status" value="1"/>
</dbReference>
<dbReference type="PANTHER" id="PTHR11548:SF2">
    <property type="entry name" value="THYMIDYLATE SYNTHASE"/>
    <property type="match status" value="1"/>
</dbReference>
<dbReference type="PANTHER" id="PTHR11548">
    <property type="entry name" value="THYMIDYLATE SYNTHASE 1"/>
    <property type="match status" value="1"/>
</dbReference>
<dbReference type="Pfam" id="PF00186">
    <property type="entry name" value="DHFR_1"/>
    <property type="match status" value="1"/>
</dbReference>
<dbReference type="Pfam" id="PF00303">
    <property type="entry name" value="Thymidylat_synt"/>
    <property type="match status" value="1"/>
</dbReference>
<dbReference type="PIRSF" id="PIRSF000389">
    <property type="entry name" value="DHFR-TS"/>
    <property type="match status" value="1"/>
</dbReference>
<dbReference type="PRINTS" id="PR00108">
    <property type="entry name" value="THYMDSNTHASE"/>
</dbReference>
<dbReference type="SUPFAM" id="SSF53597">
    <property type="entry name" value="Dihydrofolate reductase-like"/>
    <property type="match status" value="1"/>
</dbReference>
<dbReference type="SUPFAM" id="SSF55831">
    <property type="entry name" value="Thymidylate synthase/dCMP hydroxymethylase"/>
    <property type="match status" value="1"/>
</dbReference>
<dbReference type="PROSITE" id="PS00075">
    <property type="entry name" value="DHFR_1"/>
    <property type="match status" value="1"/>
</dbReference>
<dbReference type="PROSITE" id="PS51330">
    <property type="entry name" value="DHFR_2"/>
    <property type="match status" value="1"/>
</dbReference>
<dbReference type="PROSITE" id="PS00091">
    <property type="entry name" value="THYMIDYLATE_SYNTHASE"/>
    <property type="match status" value="1"/>
</dbReference>
<organism>
    <name type="scientific">Plasmodium falciparum (isolate K1 / Thailand)</name>
    <dbReference type="NCBI Taxonomy" id="5839"/>
    <lineage>
        <taxon>Eukaryota</taxon>
        <taxon>Sar</taxon>
        <taxon>Alveolata</taxon>
        <taxon>Apicomplexa</taxon>
        <taxon>Aconoidasida</taxon>
        <taxon>Haemosporida</taxon>
        <taxon>Plasmodiidae</taxon>
        <taxon>Plasmodium</taxon>
        <taxon>Plasmodium (Laverania)</taxon>
    </lineage>
</organism>
<keyword id="KW-0002">3D-structure</keyword>
<keyword id="KW-0489">Methyltransferase</keyword>
<keyword id="KW-0511">Multifunctional enzyme</keyword>
<keyword id="KW-0521">NADP</keyword>
<keyword id="KW-0545">Nucleotide biosynthesis</keyword>
<keyword id="KW-0554">One-carbon metabolism</keyword>
<keyword id="KW-0560">Oxidoreductase</keyword>
<keyword id="KW-0808">Transferase</keyword>
<comment type="function">
    <text>Bifunctional enzyme. Involved in de novo dTMP biosynthesis. Key enzyme in folate metabolism. Catalyzes an essential reaction for de novo glycine and purine synthesis, DNA precursor synthesis, and for the conversion of dUMP to dTMP.</text>
</comment>
<comment type="catalytic activity">
    <reaction>
        <text>(6S)-5,6,7,8-tetrahydrofolate + NADP(+) = 7,8-dihydrofolate + NADPH + H(+)</text>
        <dbReference type="Rhea" id="RHEA:15009"/>
        <dbReference type="ChEBI" id="CHEBI:15378"/>
        <dbReference type="ChEBI" id="CHEBI:57451"/>
        <dbReference type="ChEBI" id="CHEBI:57453"/>
        <dbReference type="ChEBI" id="CHEBI:57783"/>
        <dbReference type="ChEBI" id="CHEBI:58349"/>
        <dbReference type="EC" id="1.5.1.3"/>
    </reaction>
</comment>
<comment type="catalytic activity">
    <reaction>
        <text>dUMP + (6R)-5,10-methylene-5,6,7,8-tetrahydrofolate = 7,8-dihydrofolate + dTMP</text>
        <dbReference type="Rhea" id="RHEA:12104"/>
        <dbReference type="ChEBI" id="CHEBI:15636"/>
        <dbReference type="ChEBI" id="CHEBI:57451"/>
        <dbReference type="ChEBI" id="CHEBI:63528"/>
        <dbReference type="ChEBI" id="CHEBI:246422"/>
        <dbReference type="EC" id="2.1.1.45"/>
    </reaction>
</comment>
<comment type="pathway">
    <text>Cofactor biosynthesis; tetrahydrofolate biosynthesis; 5,6,7,8-tetrahydrofolate from 7,8-dihydrofolate: step 1/1.</text>
</comment>
<comment type="subunit">
    <text evidence="2">Homodimer.</text>
</comment>
<comment type="miscellaneous">
    <text>K1 is from a pyrimethamine-resistant strain; FCR3 is a pyrimethamine-sensitive strain.</text>
</comment>
<comment type="similarity">
    <text evidence="3">In the N-terminal section; belongs to the dihydrofolate reductase family.</text>
</comment>
<comment type="similarity">
    <text evidence="3">In the C-terminal section; belongs to the thymidylate synthase family.</text>
</comment>